<gene>
    <name evidence="14" type="primary">KIR2DL3</name>
    <name type="synonym">CD158B2</name>
    <name type="synonym">KIRCL23</name>
    <name type="synonym">NKAT2</name>
</gene>
<keyword id="KW-0002">3D-structure</keyword>
<keyword id="KW-0025">Alternative splicing</keyword>
<keyword id="KW-1003">Cell membrane</keyword>
<keyword id="KW-1015">Disulfide bond</keyword>
<keyword id="KW-0325">Glycoprotein</keyword>
<keyword id="KW-0393">Immunoglobulin domain</keyword>
<keyword id="KW-0472">Membrane</keyword>
<keyword id="KW-0675">Receptor</keyword>
<keyword id="KW-1185">Reference proteome</keyword>
<keyword id="KW-0677">Repeat</keyword>
<keyword id="KW-0732">Signal</keyword>
<keyword id="KW-0812">Transmembrane</keyword>
<keyword id="KW-1133">Transmembrane helix</keyword>
<dbReference type="EMBL" id="L41268">
    <property type="protein sequence ID" value="AAA69869.1"/>
    <property type="molecule type" value="mRNA"/>
</dbReference>
<dbReference type="EMBL" id="U24074">
    <property type="protein sequence ID" value="AAC50333.1"/>
    <property type="molecule type" value="mRNA"/>
</dbReference>
<dbReference type="EMBL" id="L76662">
    <property type="protein sequence ID" value="AAB36590.1"/>
    <property type="molecule type" value="mRNA"/>
</dbReference>
<dbReference type="EMBL" id="L76663">
    <property type="protein sequence ID" value="AAB36591.1"/>
    <property type="molecule type" value="mRNA"/>
</dbReference>
<dbReference type="EMBL" id="AF022048">
    <property type="protein sequence ID" value="AAB95321.1"/>
    <property type="molecule type" value="mRNA"/>
</dbReference>
<dbReference type="EMBL" id="U73395">
    <property type="protein sequence ID" value="AAC51147.1"/>
    <property type="molecule type" value="mRNA"/>
</dbReference>
<dbReference type="EMBL" id="BC032422">
    <property type="protein sequence ID" value="AAH32422.1"/>
    <property type="molecule type" value="mRNA"/>
</dbReference>
<dbReference type="EMBL" id="BC050730">
    <property type="protein sequence ID" value="AAH50730.1"/>
    <property type="molecule type" value="mRNA"/>
</dbReference>
<dbReference type="EMBL" id="AH006692">
    <property type="protein sequence ID" value="AAC51651.1"/>
    <property type="molecule type" value="Genomic_DNA"/>
</dbReference>
<dbReference type="EMBL" id="AH007572">
    <property type="protein sequence ID" value="AAD24477.1"/>
    <property type="molecule type" value="Genomic_DNA"/>
</dbReference>
<dbReference type="CCDS" id="CCDS33107.1">
    <molecule id="P43628-1"/>
</dbReference>
<dbReference type="PIR" id="I61725">
    <property type="entry name" value="I61725"/>
</dbReference>
<dbReference type="RefSeq" id="NP_056952.2">
    <molecule id="P43628-1"/>
    <property type="nucleotide sequence ID" value="NM_015868.3"/>
</dbReference>
<dbReference type="PDB" id="1B6U">
    <property type="method" value="X-ray"/>
    <property type="resolution" value="3.00 A"/>
    <property type="chains" value="A=22-245"/>
</dbReference>
<dbReference type="PDB" id="6PAG">
    <property type="method" value="X-ray"/>
    <property type="resolution" value="2.50 A"/>
    <property type="chains" value="D=22-225"/>
</dbReference>
<dbReference type="PDB" id="8TUI">
    <property type="method" value="X-ray"/>
    <property type="resolution" value="2.75 A"/>
    <property type="chains" value="A=22-245"/>
</dbReference>
<dbReference type="PDBsum" id="1B6U"/>
<dbReference type="PDBsum" id="6PAG"/>
<dbReference type="PDBsum" id="8TUI"/>
<dbReference type="SMR" id="P43628"/>
<dbReference type="BioGRID" id="110005">
    <property type="interactions" value="63"/>
</dbReference>
<dbReference type="FunCoup" id="P43628">
    <property type="interactions" value="225"/>
</dbReference>
<dbReference type="IntAct" id="P43628">
    <property type="interactions" value="76"/>
</dbReference>
<dbReference type="MINT" id="P43628"/>
<dbReference type="STRING" id="9606.ENSP00000342215"/>
<dbReference type="ChEMBL" id="CHEMBL3713026"/>
<dbReference type="GlyCosmos" id="P43628">
    <property type="glycosylation" value="3 sites, No reported glycans"/>
</dbReference>
<dbReference type="GlyGen" id="P43628">
    <property type="glycosylation" value="6 sites, 1 N-linked glycan (1 site)"/>
</dbReference>
<dbReference type="iPTMnet" id="P43628"/>
<dbReference type="PhosphoSitePlus" id="P43628"/>
<dbReference type="BioMuta" id="KIR2DL3"/>
<dbReference type="DMDM" id="1171727"/>
<dbReference type="MassIVE" id="P43628"/>
<dbReference type="PaxDb" id="9606-ENSP00000342215"/>
<dbReference type="PeptideAtlas" id="P43628"/>
<dbReference type="ProteomicsDB" id="55641">
    <molecule id="P43628-1"/>
</dbReference>
<dbReference type="ProteomicsDB" id="55642">
    <molecule id="P43628-2"/>
</dbReference>
<dbReference type="TopDownProteomics" id="P43628-1">
    <molecule id="P43628-1"/>
</dbReference>
<dbReference type="ABCD" id="P43628">
    <property type="antibodies" value="1 sequenced antibody"/>
</dbReference>
<dbReference type="Antibodypedia" id="35081">
    <property type="antibodies" value="542 antibodies from 32 providers"/>
</dbReference>
<dbReference type="DNASU" id="3804"/>
<dbReference type="Ensembl" id="ENST00000342376.4">
    <molecule id="P43628-1"/>
    <property type="protein sequence ID" value="ENSP00000342215.3"/>
    <property type="gene ID" value="ENSG00000243772.8"/>
</dbReference>
<dbReference type="Ensembl" id="ENST00000610407.4">
    <property type="protein sequence ID" value="ENSP00000478848.1"/>
    <property type="gene ID" value="ENSG00000274830.5"/>
</dbReference>
<dbReference type="Ensembl" id="ENST00000611207.4">
    <molecule id="P43628-1"/>
    <property type="protein sequence ID" value="ENSP00000478657.1"/>
    <property type="gene ID" value="ENSG00000276218.5"/>
</dbReference>
<dbReference type="Ensembl" id="ENST00000611369.4">
    <molecule id="P43628-1"/>
    <property type="protein sequence ID" value="ENSP00000483975.1"/>
    <property type="gene ID" value="ENSG00000277484.5"/>
</dbReference>
<dbReference type="Ensembl" id="ENST00000611821.4">
    <molecule id="P43628-1"/>
    <property type="protein sequence ID" value="ENSP00000484459.1"/>
    <property type="gene ID" value="ENSG00000276590.5"/>
</dbReference>
<dbReference type="Ensembl" id="ENST00000611990.4">
    <molecule id="P43628-1"/>
    <property type="protein sequence ID" value="ENSP00000479121.1"/>
    <property type="gene ID" value="ENSG00000278327.5"/>
</dbReference>
<dbReference type="Ensembl" id="ENST00000614792.4">
    <molecule id="P43628-1"/>
    <property type="protein sequence ID" value="ENSP00000481237.1"/>
    <property type="gene ID" value="ENSG00000277554.5"/>
</dbReference>
<dbReference type="Ensembl" id="ENST00000615091.4">
    <molecule id="P43628-1"/>
    <property type="protein sequence ID" value="ENSP00000483551.1"/>
    <property type="gene ID" value="ENSG00000275658.5"/>
</dbReference>
<dbReference type="Ensembl" id="ENST00000615739.1">
    <property type="protein sequence ID" value="ENSP00000478136.1"/>
    <property type="gene ID" value="ENSG00000273887.1"/>
</dbReference>
<dbReference type="Ensembl" id="ENST00000617150.4">
    <property type="protein sequence ID" value="ENSP00000481159.1"/>
    <property type="gene ID" value="ENSG00000274952.5"/>
</dbReference>
<dbReference type="Ensembl" id="ENST00000617242.4">
    <molecule id="P43628-1"/>
    <property type="protein sequence ID" value="ENSP00000483883.1"/>
    <property type="gene ID" value="ENSG00000274410.5"/>
</dbReference>
<dbReference type="Ensembl" id="ENST00000617404.1">
    <molecule id="P43628-1"/>
    <property type="protein sequence ID" value="ENSP00000481478.1"/>
    <property type="gene ID" value="ENSG00000275008.1"/>
</dbReference>
<dbReference type="Ensembl" id="ENST00000617593.4">
    <molecule id="P43628-1"/>
    <property type="protein sequence ID" value="ENSP00000483192.1"/>
    <property type="gene ID" value="ENSG00000274108.5"/>
</dbReference>
<dbReference type="Ensembl" id="ENST00000617790.4">
    <molecule id="P43628-1"/>
    <property type="protein sequence ID" value="ENSP00000481355.1"/>
    <property type="gene ID" value="ENSG00000275623.5"/>
</dbReference>
<dbReference type="Ensembl" id="ENST00000619702.1">
    <molecule id="P43628-1"/>
    <property type="protein sequence ID" value="ENSP00000480464.1"/>
    <property type="gene ID" value="ENSG00000274402.1"/>
</dbReference>
<dbReference type="Ensembl" id="ENST00000619995.4">
    <molecule id="P43628-1"/>
    <property type="protein sequence ID" value="ENSP00000480087.1"/>
    <property type="gene ID" value="ENSG00000277317.5"/>
</dbReference>
<dbReference type="Ensembl" id="ENST00000620549.4">
    <molecule id="P43628-1"/>
    <property type="protein sequence ID" value="ENSP00000483419.1"/>
    <property type="gene ID" value="ENSG00000277924.5"/>
</dbReference>
<dbReference type="Ensembl" id="ENST00000622644.4">
    <molecule id="P43628-1"/>
    <property type="protein sequence ID" value="ENSP00000482830.1"/>
    <property type="gene ID" value="ENSG00000276459.5"/>
</dbReference>
<dbReference type="Ensembl" id="ENST00000638813.2">
    <molecule id="P43628-1"/>
    <property type="protein sequence ID" value="ENSP00000492856.1"/>
    <property type="gene ID" value="ENSG00000284333.2"/>
</dbReference>
<dbReference type="Ensembl" id="ENST00000638851.2">
    <molecule id="P43628-1"/>
    <property type="protein sequence ID" value="ENSP00000491452.1"/>
    <property type="gene ID" value="ENSG00000283708.2"/>
</dbReference>
<dbReference type="Ensembl" id="ENST00000639089.2">
    <molecule id="P43628-1"/>
    <property type="protein sequence ID" value="ENSP00000491264.1"/>
    <property type="gene ID" value="ENSG00000283702.2"/>
</dbReference>
<dbReference type="Ensembl" id="ENST00000639101.2">
    <molecule id="P43628-1"/>
    <property type="protein sequence ID" value="ENSP00000492356.1"/>
    <property type="gene ID" value="ENSG00000283790.2"/>
</dbReference>
<dbReference type="Ensembl" id="ENST00000639176.2">
    <molecule id="P43628-1"/>
    <property type="protein sequence ID" value="ENSP00000491273.1"/>
    <property type="gene ID" value="ENSG00000284504.2"/>
</dbReference>
<dbReference type="Ensembl" id="ENST00000640485.2">
    <molecule id="P43628-1"/>
    <property type="protein sequence ID" value="ENSP00000491955.1"/>
    <property type="gene ID" value="ENSG00000284510.2"/>
</dbReference>
<dbReference type="GeneID" id="3804"/>
<dbReference type="KEGG" id="hsa:3804"/>
<dbReference type="MANE-Select" id="ENST00000342376.4">
    <property type="protein sequence ID" value="ENSP00000342215.3"/>
    <property type="RefSeq nucleotide sequence ID" value="NM_015868.3"/>
    <property type="RefSeq protein sequence ID" value="NP_056952.2"/>
</dbReference>
<dbReference type="UCSC" id="uc002qgx.4">
    <molecule id="P43628-1"/>
    <property type="organism name" value="human"/>
</dbReference>
<dbReference type="AGR" id="HGNC:6331"/>
<dbReference type="CTD" id="3804"/>
<dbReference type="DisGeNET" id="3804"/>
<dbReference type="GeneCards" id="KIR2DL3"/>
<dbReference type="HGNC" id="HGNC:6331">
    <property type="gene designation" value="KIR2DL3"/>
</dbReference>
<dbReference type="HPA" id="ENSG00000243772">
    <property type="expression patterns" value="Tissue enhanced (lymphoid)"/>
</dbReference>
<dbReference type="MalaCards" id="KIR2DL3"/>
<dbReference type="MIM" id="604938">
    <property type="type" value="gene"/>
</dbReference>
<dbReference type="neXtProt" id="NX_P43628"/>
<dbReference type="OpenTargets" id="ENSG00000243772"/>
<dbReference type="PharmGKB" id="PA30116"/>
<dbReference type="VEuPathDB" id="HostDB:ENSG00000243772"/>
<dbReference type="eggNOG" id="ENOG502RU21">
    <property type="taxonomic scope" value="Eukaryota"/>
</dbReference>
<dbReference type="GeneTree" id="ENSGT01100000263478"/>
<dbReference type="InParanoid" id="P43628"/>
<dbReference type="OMA" id="VACVGEC"/>
<dbReference type="OrthoDB" id="9516369at2759"/>
<dbReference type="PAN-GO" id="P43628">
    <property type="GO annotations" value="1 GO annotation based on evolutionary models"/>
</dbReference>
<dbReference type="PhylomeDB" id="P43628"/>
<dbReference type="TreeFam" id="TF352669"/>
<dbReference type="PathwayCommons" id="P43628"/>
<dbReference type="Reactome" id="R-HSA-198933">
    <property type="pathway name" value="Immunoregulatory interactions between a Lymphoid and a non-Lymphoid cell"/>
</dbReference>
<dbReference type="SignaLink" id="P43628"/>
<dbReference type="BioGRID-ORCS" id="3804">
    <property type="hits" value="16 hits in 1039 CRISPR screens"/>
</dbReference>
<dbReference type="CD-CODE" id="232F8A39">
    <property type="entry name" value="P-body"/>
</dbReference>
<dbReference type="CD-CODE" id="804901D1">
    <property type="entry name" value="Nuclear speckle"/>
</dbReference>
<dbReference type="ChiTaRS" id="KIR2DL3">
    <property type="organism name" value="human"/>
</dbReference>
<dbReference type="EvolutionaryTrace" id="P43628"/>
<dbReference type="GenomeRNAi" id="3804"/>
<dbReference type="Pharos" id="P43628">
    <property type="development level" value="Tbio"/>
</dbReference>
<dbReference type="PRO" id="PR:P43628"/>
<dbReference type="Proteomes" id="UP000005640">
    <property type="component" value="Chromosome 19"/>
</dbReference>
<dbReference type="RNAct" id="P43628">
    <property type="molecule type" value="protein"/>
</dbReference>
<dbReference type="Bgee" id="ENSG00000243772">
    <property type="expression patterns" value="Expressed in male germ line stem cell (sensu Vertebrata) in testis and 33 other cell types or tissues"/>
</dbReference>
<dbReference type="ExpressionAtlas" id="P43628">
    <property type="expression patterns" value="baseline and differential"/>
</dbReference>
<dbReference type="GO" id="GO:0016020">
    <property type="term" value="C:membrane"/>
    <property type="evidence" value="ECO:0000304"/>
    <property type="project" value="ProtInc"/>
</dbReference>
<dbReference type="GO" id="GO:0005886">
    <property type="term" value="C:plasma membrane"/>
    <property type="evidence" value="ECO:0000318"/>
    <property type="project" value="GO_Central"/>
</dbReference>
<dbReference type="GO" id="GO:0003823">
    <property type="term" value="F:antigen binding"/>
    <property type="evidence" value="ECO:0000304"/>
    <property type="project" value="ProtInc"/>
</dbReference>
<dbReference type="GO" id="GO:0042802">
    <property type="term" value="F:identical protein binding"/>
    <property type="evidence" value="ECO:0000353"/>
    <property type="project" value="IntAct"/>
</dbReference>
<dbReference type="GO" id="GO:0038023">
    <property type="term" value="F:signaling receptor activity"/>
    <property type="evidence" value="ECO:0000304"/>
    <property type="project" value="ProtInc"/>
</dbReference>
<dbReference type="GO" id="GO:0006955">
    <property type="term" value="P:immune response"/>
    <property type="evidence" value="ECO:0000304"/>
    <property type="project" value="ProtInc"/>
</dbReference>
<dbReference type="GO" id="GO:0002764">
    <property type="term" value="P:immune response-regulating signaling pathway"/>
    <property type="evidence" value="ECO:0000318"/>
    <property type="project" value="GO_Central"/>
</dbReference>
<dbReference type="CDD" id="cd05711">
    <property type="entry name" value="IgC2_D2_LILR_KIR_like"/>
    <property type="match status" value="1"/>
</dbReference>
<dbReference type="FunFam" id="2.60.40.10:FF:000033">
    <property type="entry name" value="Killer cell immunoglobulin-like receptor"/>
    <property type="match status" value="1"/>
</dbReference>
<dbReference type="FunFam" id="2.60.40.10:FF:000049">
    <property type="entry name" value="Leukocyte immunoglobulin-like receptor subfamily B member 1"/>
    <property type="match status" value="1"/>
</dbReference>
<dbReference type="Gene3D" id="2.60.40.10">
    <property type="entry name" value="Immunoglobulins"/>
    <property type="match status" value="2"/>
</dbReference>
<dbReference type="InterPro" id="IPR036179">
    <property type="entry name" value="Ig-like_dom_sf"/>
</dbReference>
<dbReference type="InterPro" id="IPR013783">
    <property type="entry name" value="Ig-like_fold"/>
</dbReference>
<dbReference type="InterPro" id="IPR050412">
    <property type="entry name" value="Ig-like_Receptors_ImmuneReg"/>
</dbReference>
<dbReference type="InterPro" id="IPR003599">
    <property type="entry name" value="Ig_sub"/>
</dbReference>
<dbReference type="InterPro" id="IPR013151">
    <property type="entry name" value="Immunoglobulin_dom"/>
</dbReference>
<dbReference type="PANTHER" id="PTHR11738:SF168">
    <property type="entry name" value="IMMUNOGLOBULIN SUBTYPE DOMAIN-CONTAINING PROTEIN-RELATED"/>
    <property type="match status" value="1"/>
</dbReference>
<dbReference type="PANTHER" id="PTHR11738">
    <property type="entry name" value="MHC CLASS I NK CELL RECEPTOR"/>
    <property type="match status" value="1"/>
</dbReference>
<dbReference type="Pfam" id="PF00047">
    <property type="entry name" value="ig"/>
    <property type="match status" value="2"/>
</dbReference>
<dbReference type="SMART" id="SM00409">
    <property type="entry name" value="IG"/>
    <property type="match status" value="2"/>
</dbReference>
<dbReference type="SUPFAM" id="SSF48726">
    <property type="entry name" value="Immunoglobulin"/>
    <property type="match status" value="2"/>
</dbReference>
<reference key="1">
    <citation type="journal article" date="1995" name="Science">
        <title>Cloning of immunoglobulin-superfamily members associated with HLA-C and HLA-B recognition by human natural killer cells.</title>
        <authorList>
            <person name="Colonna M."/>
            <person name="Samaridis J."/>
        </authorList>
    </citation>
    <scope>NUCLEOTIDE SEQUENCE [MRNA] (ISOFORM 1)</scope>
    <source>
        <tissue>Natural killer cell</tissue>
    </source>
</reference>
<reference key="2">
    <citation type="journal article" date="1995" name="Immunity">
        <title>Molecular clones of the p58 NK cell receptor reveal immunoglobulin-related molecules with diversity in both the extra- and intracellular domains.</title>
        <authorList>
            <person name="Wagtmann N."/>
            <person name="Biassoni R."/>
            <person name="Cantoni C."/>
            <person name="Verdiani S."/>
            <person name="Malnati M.S."/>
            <person name="Vitale M."/>
            <person name="Bottino C."/>
            <person name="Moretta L."/>
            <person name="Moretta A."/>
            <person name="Long E.O."/>
        </authorList>
    </citation>
    <scope>NUCLEOTIDE SEQUENCE [MRNA] (ISOFORM 1)</scope>
    <source>
        <tissue>Natural killer cell</tissue>
    </source>
</reference>
<reference key="3">
    <citation type="journal article" date="1996" name="Immunogenetics">
        <title>Alternatively spliced forms of human killer inhibitory receptors.</title>
        <authorList>
            <person name="Doehring C."/>
            <person name="Samaridis J."/>
            <person name="Colonna M."/>
        </authorList>
    </citation>
    <scope>NUCLEOTIDE SEQUENCE [MRNA] (ISOFORMS 1 AND 2)</scope>
    <scope>VARIANTS LEU-229; THR-304 AND HIS-318</scope>
</reference>
<reference key="4">
    <citation type="journal article" date="1997" name="Immunity">
        <title>Human diversity in killer cell inhibitory receptor genes.</title>
        <authorList>
            <person name="Uhrberg M."/>
            <person name="Valiante N.M."/>
            <person name="Shum B.P."/>
            <person name="Shilling H.G."/>
            <person name="Lienert-Weidenbach K."/>
            <person name="Corliss B."/>
            <person name="Tyan D."/>
            <person name="Lanier L.L."/>
            <person name="Parham P."/>
        </authorList>
    </citation>
    <scope>NUCLEOTIDE SEQUENCE (ISOFORM 1)</scope>
    <scope>VARIANTS ALA-9; ARG-32; GLU-56; ARG-71 AND HIS-318</scope>
</reference>
<reference key="5">
    <citation type="journal article" date="1997" name="Immunol. Rev.">
        <title>Polymorphism and domain variability of human killer cell inhibitory receptors.</title>
        <authorList>
            <person name="Selvakumar A."/>
            <person name="Steffens U."/>
            <person name="Dupont B."/>
        </authorList>
    </citation>
    <scope>NUCLEOTIDE SEQUENCE [MRNA] (ISOFORM 1)</scope>
    <scope>VARIANTS ALA-9; ARG-32; GLU-56; ARG-71; ILE-242 AND HIS-318</scope>
</reference>
<reference key="6">
    <citation type="journal article" date="2004" name="Genome Res.">
        <title>The status, quality, and expansion of the NIH full-length cDNA project: the Mammalian Gene Collection (MGC).</title>
        <authorList>
            <consortium name="The MGC Project Team"/>
        </authorList>
    </citation>
    <scope>NUCLEOTIDE SEQUENCE [LARGE SCALE MRNA] (ISOFORM 1)</scope>
    <scope>VARIANTS LEU-229 AND HIS-318</scope>
    <source>
        <tissue>Blood</tissue>
    </source>
</reference>
<reference key="7">
    <citation type="journal article" date="1997" name="Tissue Antigens">
        <title>Genomic organization of a human killer cell inhibitory receptor gene.</title>
        <authorList>
            <person name="Wilson M.J."/>
            <person name="Torkar M."/>
            <person name="Trowsdale J."/>
        </authorList>
    </citation>
    <scope>NUCLEOTIDE SEQUENCE [GENOMIC DNA] OF 1-298 (ISOFORM 1)</scope>
    <scope>VARIANT LEU-229</scope>
</reference>
<reference key="8">
    <citation type="submission" date="1999-03" db="EMBL/GenBank/DDBJ databases">
        <title>Genomic organization of novel genes encoding human killer inhibitory receptors.</title>
        <authorList>
            <person name="Chae J.H."/>
            <person name="Kim Y.M."/>
            <person name="Ahn J.M."/>
            <person name="Kim C.G."/>
            <person name="Kim J."/>
            <person name="Kim S.J."/>
            <person name="Park J.H."/>
        </authorList>
    </citation>
    <scope>NUCLEOTIDE SEQUENCE [GENOMIC DNA] OF 25-341</scope>
    <scope>VARIANT GLN-34</scope>
    <source>
        <tissue>Placenta</tissue>
    </source>
</reference>
<reference key="9">
    <citation type="journal article" date="2008" name="Nat. Immunol.">
        <title>An essential function for beta-arrestin 2 in the inhibitory signaling of natural killer cells.</title>
        <authorList>
            <person name="Yu M.-C."/>
            <person name="Su L.-L."/>
            <person name="Zou L."/>
            <person name="Liu Y."/>
            <person name="Wu N."/>
            <person name="Kong L."/>
            <person name="Zhuang Z.-H."/>
            <person name="Sun L."/>
            <person name="Liu H.P."/>
            <person name="Hu J.-H."/>
            <person name="Li D."/>
            <person name="Strominger J.L."/>
            <person name="Zang J.-W."/>
            <person name="Pei G."/>
            <person name="Ge B.-X."/>
        </authorList>
    </citation>
    <scope>INTERACTION WITH ARRB2</scope>
</reference>
<reference key="10">
    <citation type="journal article" date="1999" name="Structure">
        <title>Crystal structure of the human p58 killer cell inhibitory receptor (KIR2DL3) specific for HLA-Cw3-related MHC class I.</title>
        <authorList>
            <person name="Maenaka K."/>
            <person name="Juji T."/>
            <person name="Stuart D.I."/>
            <person name="Jones E.Y."/>
        </authorList>
    </citation>
    <scope>X-RAY CRYSTALLOGRAPHY (3.0 ANGSTROMS) OF 22-245</scope>
</reference>
<sequence length="341" mass="37886">MSLMVVSMVCVGFFLLQGAWPHEGVHRKPSLLAHPGPLVKSEETVILQCWSDVRFQHFLLHREGKFKDTLHLIGEHHDGVSKANFSIGPMMQDLAGTYRCYGSVTHSPYQLSAPSDPLDIVITGLYEKPSLSAQPGPTVLAGESVTLSCSSRSSYDMYHLSREGEAHERRFSAGPKVNGTFQADFPLGPATHGGTYRCFGSFRDSPYEWSNSSDPLLVSVTGNPSNSWPSPTEPSSETGNPRHLHVLIGTSVVIILFILLLFFLLHRWCCNKKNAVVMDQEPAGNRTVNREDSDEQDPQEVTYAQLNHCVFTQRKITRPSQRPKTPPTDIIVYTELPNAEP</sequence>
<name>KI2L3_HUMAN</name>
<comment type="function">
    <text>Receptor on natural killer (NK) cells for HLA-C alleles (HLA-Cw1, HLA-Cw3 and HLA-Cw7). Inhibits the activity of NK cells thus preventing cell lysis.</text>
</comment>
<comment type="subunit">
    <text evidence="6">Interacts with ARRB2.</text>
</comment>
<comment type="interaction">
    <interactant intactId="EBI-8632435">
        <id>P43628</id>
    </interactant>
    <interactant intactId="EBI-11277970">
        <id>Q9UHX3</id>
        <label>ADGRE2</label>
    </interactant>
    <organismsDiffer>false</organismsDiffer>
    <experiments>3</experiments>
</comment>
<comment type="interaction">
    <interactant intactId="EBI-8632435">
        <id>P43628</id>
    </interactant>
    <interactant intactId="EBI-11522760">
        <id>Q6RW13-2</id>
        <label>AGTRAP</label>
    </interactant>
    <organismsDiffer>false</organismsDiffer>
    <experiments>3</experiments>
</comment>
<comment type="interaction">
    <interactant intactId="EBI-8632435">
        <id>P43628</id>
    </interactant>
    <interactant intactId="EBI-11957045">
        <id>Q9NVV5-2</id>
        <label>AIG1</label>
    </interactant>
    <organismsDiffer>false</organismsDiffer>
    <experiments>3</experiments>
</comment>
<comment type="interaction">
    <interactant intactId="EBI-8632435">
        <id>P43628</id>
    </interactant>
    <interactant intactId="EBI-12109402">
        <id>Q86W74-2</id>
        <label>ANKRD46</label>
    </interactant>
    <organismsDiffer>false</organismsDiffer>
    <experiments>3</experiments>
</comment>
<comment type="interaction">
    <interactant intactId="EBI-8632435">
        <id>P43628</id>
    </interactant>
    <interactant intactId="EBI-1171525">
        <id>P02652</id>
        <label>APOA2</label>
    </interactant>
    <organismsDiffer>false</organismsDiffer>
    <experiments>3</experiments>
</comment>
<comment type="interaction">
    <interactant intactId="EBI-8632435">
        <id>P43628</id>
    </interactant>
    <interactant intactId="EBI-715495">
        <id>P05090</id>
        <label>APOD</label>
    </interactant>
    <organismsDiffer>false</organismsDiffer>
    <experiments>3</experiments>
</comment>
<comment type="interaction">
    <interactant intactId="EBI-8632435">
        <id>P43628</id>
    </interactant>
    <interactant intactId="EBI-12820279">
        <id>Q96PS8</id>
        <label>AQP10</label>
    </interactant>
    <organismsDiffer>false</organismsDiffer>
    <experiments>3</experiments>
</comment>
<comment type="interaction">
    <interactant intactId="EBI-8632435">
        <id>P43628</id>
    </interactant>
    <interactant intactId="EBI-1172335">
        <id>P07306</id>
        <label>ASGR1</label>
    </interactant>
    <organismsDiffer>false</organismsDiffer>
    <experiments>3</experiments>
</comment>
<comment type="interaction">
    <interactant intactId="EBI-8632435">
        <id>P43628</id>
    </interactant>
    <interactant intactId="EBI-12935759">
        <id>O15342</id>
        <label>ATP6V0E1</label>
    </interactant>
    <organismsDiffer>false</organismsDiffer>
    <experiments>3</experiments>
</comment>
<comment type="interaction">
    <interactant intactId="EBI-8632435">
        <id>P43628</id>
    </interactant>
    <interactant intactId="EBI-3922513">
        <id>O95393</id>
        <label>BMP10</label>
    </interactant>
    <organismsDiffer>false</organismsDiffer>
    <experiments>3</experiments>
</comment>
<comment type="interaction">
    <interactant intactId="EBI-8632435">
        <id>P43628</id>
    </interactant>
    <interactant intactId="EBI-12244618">
        <id>Q6PL45-2</id>
        <label>BRICD5</label>
    </interactant>
    <organismsDiffer>false</organismsDiffer>
    <experiments>3</experiments>
</comment>
<comment type="interaction">
    <interactant intactId="EBI-8632435">
        <id>P43628</id>
    </interactant>
    <interactant intactId="EBI-8648738">
        <id>Q8WVV5</id>
        <label>BTN2A2</label>
    </interactant>
    <organismsDiffer>false</organismsDiffer>
    <experiments>3</experiments>
</comment>
<comment type="interaction">
    <interactant intactId="EBI-8632435">
        <id>P43628</id>
    </interactant>
    <interactant intactId="EBI-358858">
        <id>O14735</id>
        <label>CDIPT</label>
    </interactant>
    <organismsDiffer>false</organismsDiffer>
    <experiments>3</experiments>
</comment>
<comment type="interaction">
    <interactant intactId="EBI-8632435">
        <id>P43628</id>
    </interactant>
    <interactant intactId="EBI-1045797">
        <id>Q8N5K1</id>
        <label>CISD2</label>
    </interactant>
    <organismsDiffer>false</organismsDiffer>
    <experiments>3</experiments>
</comment>
<comment type="interaction">
    <interactant intactId="EBI-8632435">
        <id>P43628</id>
    </interactant>
    <interactant intactId="EBI-12256978">
        <id>Q8N6F1-2</id>
        <label>CLDN19</label>
    </interactant>
    <organismsDiffer>false</organismsDiffer>
    <experiments>3</experiments>
</comment>
<comment type="interaction">
    <interactant intactId="EBI-8632435">
        <id>P43628</id>
    </interactant>
    <interactant intactId="EBI-6165897">
        <id>Q9NWW5</id>
        <label>CLN6</label>
    </interactant>
    <organismsDiffer>false</organismsDiffer>
    <experiments>3</experiments>
</comment>
<comment type="interaction">
    <interactant intactId="EBI-8632435">
        <id>P43628</id>
    </interactant>
    <interactant intactId="EBI-724524">
        <id>O75208</id>
        <label>COQ9</label>
    </interactant>
    <organismsDiffer>false</organismsDiffer>
    <experiments>3</experiments>
</comment>
<comment type="interaction">
    <interactant intactId="EBI-8632435">
        <id>P43628</id>
    </interactant>
    <interactant intactId="EBI-3911467">
        <id>Q07325</id>
        <label>CXCL9</label>
    </interactant>
    <organismsDiffer>false</organismsDiffer>
    <experiments>3</experiments>
</comment>
<comment type="interaction">
    <interactant intactId="EBI-8632435">
        <id>P43628</id>
    </interactant>
    <interactant intactId="EBI-1058710">
        <id>O43169</id>
        <label>CYB5B</label>
    </interactant>
    <organismsDiffer>false</organismsDiffer>
    <experiments>3</experiments>
</comment>
<comment type="interaction">
    <interactant intactId="EBI-8632435">
        <id>P43628</id>
    </interactant>
    <interactant intactId="EBI-2680384">
        <id>Q9BQA9</id>
        <label>CYBC1</label>
    </interactant>
    <organismsDiffer>false</organismsDiffer>
    <experiments>3</experiments>
</comment>
<comment type="interaction">
    <interactant intactId="EBI-8632435">
        <id>P43628</id>
    </interactant>
    <interactant intactId="EBI-489887">
        <id>P50402</id>
        <label>EMD</label>
    </interactant>
    <organismsDiffer>false</organismsDiffer>
    <experiments>3</experiments>
</comment>
<comment type="interaction">
    <interactant intactId="EBI-8632435">
        <id>P43628</id>
    </interactant>
    <interactant intactId="EBI-18304435">
        <id>Q5JX71</id>
        <label>FAM209A</label>
    </interactant>
    <organismsDiffer>false</organismsDiffer>
    <experiments>3</experiments>
</comment>
<comment type="interaction">
    <interactant intactId="EBI-8632435">
        <id>P43628</id>
    </interactant>
    <interactant intactId="EBI-2876774">
        <id>Q92520</id>
        <label>FAM3C</label>
    </interactant>
    <organismsDiffer>false</organismsDiffer>
    <experiments>3</experiments>
</comment>
<comment type="interaction">
    <interactant intactId="EBI-8632435">
        <id>P43628</id>
    </interactant>
    <interactant intactId="EBI-714482">
        <id>Q9BWH2</id>
        <label>FUNDC2</label>
    </interactant>
    <organismsDiffer>false</organismsDiffer>
    <experiments>3</experiments>
</comment>
<comment type="interaction">
    <interactant intactId="EBI-8632435">
        <id>P43628</id>
    </interactant>
    <interactant intactId="EBI-3436637">
        <id>P01350</id>
        <label>GAST</label>
    </interactant>
    <organismsDiffer>false</organismsDiffer>
    <experiments>3</experiments>
</comment>
<comment type="interaction">
    <interactant intactId="EBI-8632435">
        <id>P43628</id>
    </interactant>
    <interactant intactId="EBI-17458373">
        <id>P48165</id>
        <label>GJA8</label>
    </interactant>
    <organismsDiffer>false</organismsDiffer>
    <experiments>3</experiments>
</comment>
<comment type="interaction">
    <interactant intactId="EBI-8632435">
        <id>P43628</id>
    </interactant>
    <interactant intactId="EBI-11343451">
        <id>Q9NPR9</id>
        <label>GPR108</label>
    </interactant>
    <organismsDiffer>false</organismsDiffer>
    <experiments>3</experiments>
</comment>
<comment type="interaction">
    <interactant intactId="EBI-8632435">
        <id>P43628</id>
    </interactant>
    <interactant intactId="EBI-11721746">
        <id>Q8TED1</id>
        <label>GPX8</label>
    </interactant>
    <organismsDiffer>false</organismsDiffer>
    <experiments>3</experiments>
</comment>
<comment type="interaction">
    <interactant intactId="EBI-8632435">
        <id>P43628</id>
    </interactant>
    <interactant intactId="EBI-1046513">
        <id>P01889</id>
        <label>HLA-B</label>
    </interactant>
    <organismsDiffer>false</organismsDiffer>
    <experiments>2</experiments>
</comment>
<comment type="interaction">
    <interactant intactId="EBI-8632435">
        <id>P43628</id>
    </interactant>
    <interactant intactId="EBI-1051396">
        <id>P10321</id>
        <label>HLA-C</label>
    </interactant>
    <organismsDiffer>false</organismsDiffer>
    <experiments>9</experiments>
</comment>
<comment type="interaction">
    <interactant intactId="EBI-8632435">
        <id>P43628</id>
    </interactant>
    <interactant intactId="EBI-13917186">
        <id>Q53YP1</id>
        <label>HLA-C</label>
    </interactant>
    <organismsDiffer>false</organismsDiffer>
    <experiments>2</experiments>
</comment>
<comment type="interaction">
    <interactant intactId="EBI-8632435">
        <id>P43628</id>
    </interactant>
    <interactant intactId="EBI-7932862">
        <id>Q01628</id>
        <label>IFITM3</label>
    </interactant>
    <organismsDiffer>false</organismsDiffer>
    <experiments>3</experiments>
</comment>
<comment type="interaction">
    <interactant intactId="EBI-8632435">
        <id>P43628</id>
    </interactant>
    <interactant intactId="EBI-8503746">
        <id>Q9Y5U4</id>
        <label>INSIG2</label>
    </interactant>
    <organismsDiffer>false</organismsDiffer>
    <experiments>3</experiments>
</comment>
<comment type="interaction">
    <interactant intactId="EBI-8632435">
        <id>P43628</id>
    </interactant>
    <interactant intactId="EBI-2568251">
        <id>P11215</id>
        <label>ITGAM</label>
    </interactant>
    <organismsDiffer>false</organismsDiffer>
    <experiments>3</experiments>
</comment>
<comment type="interaction">
    <interactant intactId="EBI-8632435">
        <id>P43628</id>
    </interactant>
    <interactant intactId="EBI-10266796">
        <id>Q8N5M9</id>
        <label>JAGN1</label>
    </interactant>
    <organismsDiffer>false</organismsDiffer>
    <experiments>3</experiments>
</comment>
<comment type="interaction">
    <interactant intactId="EBI-8632435">
        <id>P43628</id>
    </interactant>
    <interactant intactId="EBI-8632435">
        <id>P43628</id>
        <label>KIR2DL3</label>
    </interactant>
    <organismsDiffer>false</organismsDiffer>
    <experiments>3</experiments>
</comment>
<comment type="interaction">
    <interactant intactId="EBI-8632435">
        <id>P43628</id>
    </interactant>
    <interactant intactId="EBI-12007212">
        <id>Q86UP2-3</id>
        <label>KTN1</label>
    </interactant>
    <organismsDiffer>false</organismsDiffer>
    <experiments>3</experiments>
</comment>
<comment type="interaction">
    <interactant intactId="EBI-8632435">
        <id>P43628</id>
    </interactant>
    <interactant intactId="EBI-8070286">
        <id>O43561-2</id>
        <label>LAT</label>
    </interactant>
    <organismsDiffer>false</organismsDiffer>
    <experiments>3</experiments>
</comment>
<comment type="interaction">
    <interactant intactId="EBI-8632435">
        <id>P43628</id>
    </interactant>
    <interactant intactId="EBI-17490413">
        <id>A8MZ59</id>
        <label>LEUTX</label>
    </interactant>
    <organismsDiffer>false</organismsDiffer>
    <experiments>3</experiments>
</comment>
<comment type="interaction">
    <interactant intactId="EBI-8632435">
        <id>P43628</id>
    </interactant>
    <interactant intactId="EBI-2820517">
        <id>Q8TAF8</id>
        <label>LHFPL5</label>
    </interactant>
    <organismsDiffer>false</organismsDiffer>
    <experiments>3</experiments>
</comment>
<comment type="interaction">
    <interactant intactId="EBI-8632435">
        <id>P43628</id>
    </interactant>
    <interactant intactId="EBI-10317425">
        <id>Q9NZG7</id>
        <label>NINJ2</label>
    </interactant>
    <organismsDiffer>false</organismsDiffer>
    <experiments>3</experiments>
</comment>
<comment type="interaction">
    <interactant intactId="EBI-8632435">
        <id>P43628</id>
    </interactant>
    <interactant intactId="EBI-10262547">
        <id>Q8IXM6</id>
        <label>NRM</label>
    </interactant>
    <organismsDiffer>false</organismsDiffer>
    <experiments>3</experiments>
</comment>
<comment type="interaction">
    <interactant intactId="EBI-8632435">
        <id>P43628</id>
    </interactant>
    <interactant intactId="EBI-6380741">
        <id>P42857</id>
        <label>NSG1</label>
    </interactant>
    <organismsDiffer>false</organismsDiffer>
    <experiments>3</experiments>
</comment>
<comment type="interaction">
    <interactant intactId="EBI-8632435">
        <id>P43628</id>
    </interactant>
    <interactant intactId="EBI-2804156">
        <id>Q6UX06</id>
        <label>OLFM4</label>
    </interactant>
    <organismsDiffer>false</organismsDiffer>
    <experiments>3</experiments>
</comment>
<comment type="interaction">
    <interactant intactId="EBI-8632435">
        <id>P43628</id>
    </interactant>
    <interactant intactId="EBI-692836">
        <id>P26678</id>
        <label>PLN</label>
    </interactant>
    <organismsDiffer>false</organismsDiffer>
    <experiments>3</experiments>
</comment>
<comment type="interaction">
    <interactant intactId="EBI-8632435">
        <id>P43628</id>
    </interactant>
    <interactant intactId="EBI-12955265">
        <id>Q96GM1</id>
        <label>PLPPR2</label>
    </interactant>
    <organismsDiffer>false</organismsDiffer>
    <experiments>3</experiments>
</comment>
<comment type="interaction">
    <interactant intactId="EBI-8632435">
        <id>P43628</id>
    </interactant>
    <interactant intactId="EBI-297779">
        <id>Q06124</id>
        <label>PTPN11</label>
    </interactant>
    <organismsDiffer>false</organismsDiffer>
    <experiments>4</experiments>
</comment>
<comment type="interaction">
    <interactant intactId="EBI-8632435">
        <id>P43628</id>
    </interactant>
    <interactant intactId="EBI-78260">
        <id>P29350</id>
        <label>PTPN6</label>
    </interactant>
    <organismsDiffer>false</organismsDiffer>
    <experiments>13</experiments>
</comment>
<comment type="interaction">
    <interactant intactId="EBI-8632435">
        <id>P43628</id>
    </interactant>
    <interactant intactId="EBI-2129725">
        <id>Q8N8N0</id>
        <label>RNF152</label>
    </interactant>
    <organismsDiffer>false</organismsDiffer>
    <experiments>3</experiments>
</comment>
<comment type="interaction">
    <interactant intactId="EBI-8632435">
        <id>P43628</id>
    </interactant>
    <interactant intactId="EBI-10244780">
        <id>Q5QGT7</id>
        <label>RTP2</label>
    </interactant>
    <organismsDiffer>false</organismsDiffer>
    <experiments>3</experiments>
</comment>
<comment type="interaction">
    <interactant intactId="EBI-8632435">
        <id>P43628</id>
    </interactant>
    <interactant intactId="EBI-1058865">
        <id>O75396</id>
        <label>SEC22B</label>
    </interactant>
    <organismsDiffer>false</organismsDiffer>
    <experiments>3</experiments>
</comment>
<comment type="interaction">
    <interactant intactId="EBI-8632435">
        <id>P43628</id>
    </interactant>
    <interactant intactId="EBI-10314552">
        <id>Q9NVC3</id>
        <label>SLC38A7</label>
    </interactant>
    <organismsDiffer>false</organismsDiffer>
    <experiments>3</experiments>
</comment>
<comment type="interaction">
    <interactant intactId="EBI-8632435">
        <id>P43628</id>
    </interactant>
    <interactant intactId="EBI-12188413">
        <id>B2RUZ4</id>
        <label>SMIM1</label>
    </interactant>
    <organismsDiffer>false</organismsDiffer>
    <experiments>3</experiments>
</comment>
<comment type="interaction">
    <interactant intactId="EBI-8632435">
        <id>P43628</id>
    </interactant>
    <interactant intactId="EBI-11957067">
        <id>Q6UX34</id>
        <label>SNORC</label>
    </interactant>
    <organismsDiffer>false</organismsDiffer>
    <experiments>3</experiments>
</comment>
<comment type="interaction">
    <interactant intactId="EBI-8632435">
        <id>P43628</id>
    </interactant>
    <interactant intactId="EBI-941422">
        <id>P07204</id>
        <label>THBD</label>
    </interactant>
    <organismsDiffer>false</organismsDiffer>
    <experiments>3</experiments>
</comment>
<comment type="interaction">
    <interactant intactId="EBI-8632435">
        <id>P43628</id>
    </interactant>
    <interactant intactId="EBI-10173151">
        <id>A2RU14</id>
        <label>TMEM218</label>
    </interactant>
    <organismsDiffer>false</organismsDiffer>
    <experiments>3</experiments>
</comment>
<comment type="interaction">
    <interactant intactId="EBI-8632435">
        <id>P43628</id>
    </interactant>
    <interactant intactId="EBI-347385">
        <id>Q9H0R3</id>
        <label>TMEM222</label>
    </interactant>
    <organismsDiffer>false</organismsDiffer>
    <experiments>3</experiments>
</comment>
<comment type="interaction">
    <interactant intactId="EBI-8632435">
        <id>P43628</id>
    </interactant>
    <interactant intactId="EBI-12887458">
        <id>Q9BU79</id>
        <label>TMEM243</label>
    </interactant>
    <organismsDiffer>false</organismsDiffer>
    <experiments>3</experiments>
</comment>
<comment type="interaction">
    <interactant intactId="EBI-8632435">
        <id>P43628</id>
    </interactant>
    <interactant intactId="EBI-2548832">
        <id>Q8N661</id>
        <label>TMEM86B</label>
    </interactant>
    <organismsDiffer>false</organismsDiffer>
    <experiments>3</experiments>
</comment>
<comment type="interaction">
    <interactant intactId="EBI-8632435">
        <id>P43628</id>
    </interactant>
    <interactant intactId="EBI-12111910">
        <id>Q5BJF2</id>
        <label>TMEM97</label>
    </interactant>
    <organismsDiffer>false</organismsDiffer>
    <experiments>3</experiments>
</comment>
<comment type="interaction">
    <interactant intactId="EBI-8632435">
        <id>P43628</id>
    </interactant>
    <interactant intactId="EBI-765817">
        <id>Q9Y228</id>
        <label>TRAF3IP3</label>
    </interactant>
    <organismsDiffer>false</organismsDiffer>
    <experiments>3</experiments>
</comment>
<comment type="interaction">
    <interactant intactId="EBI-8632435">
        <id>P43628</id>
    </interactant>
    <interactant intactId="EBI-10243654">
        <id>Q5BVD1</id>
        <label>TTMP</label>
    </interactant>
    <organismsDiffer>false</organismsDiffer>
    <experiments>3</experiments>
</comment>
<comment type="interaction">
    <interactant intactId="EBI-8632435">
        <id>P43628</id>
    </interactant>
    <interactant intactId="EBI-12237619">
        <id>O75841</id>
        <label>UPK1B</label>
    </interactant>
    <organismsDiffer>false</organismsDiffer>
    <experiments>3</experiments>
</comment>
<comment type="interaction">
    <interactant intactId="EBI-8632435">
        <id>P43628</id>
    </interactant>
    <interactant intactId="EBI-10179682">
        <id>O00526</id>
        <label>UPK2</label>
    </interactant>
    <organismsDiffer>false</organismsDiffer>
    <experiments>3</experiments>
</comment>
<comment type="interaction">
    <interactant intactId="EBI-8632435">
        <id>P43628</id>
    </interactant>
    <interactant intactId="EBI-10191195">
        <id>O95183</id>
        <label>VAMP5</label>
    </interactant>
    <organismsDiffer>false</organismsDiffer>
    <experiments>3</experiments>
</comment>
<comment type="subcellular location">
    <subcellularLocation>
        <location>Cell membrane</location>
        <topology>Single-pass type I membrane protein</topology>
    </subcellularLocation>
</comment>
<comment type="alternative products">
    <event type="alternative splicing"/>
    <isoform>
        <id>P43628-1</id>
        <name>1</name>
        <sequence type="displayed"/>
    </isoform>
    <isoform>
        <id>P43628-2</id>
        <name>2</name>
        <name>NKAT2a-delta-Ig2</name>
        <sequence type="described" ref="VSP_007814"/>
    </isoform>
</comment>
<comment type="similarity">
    <text evidence="13">Belongs to the immunoglobulin superfamily.</text>
</comment>
<protein>
    <recommendedName>
        <fullName evidence="13">Killer cell immunoglobulin-like receptor 2DL3</fullName>
    </recommendedName>
    <alternativeName>
        <fullName>CD158 antigen-like family member B2</fullName>
    </alternativeName>
    <alternativeName>
        <fullName>KIR-023GB</fullName>
    </alternativeName>
    <alternativeName>
        <fullName>Killer inhibitory receptor cl 2-3</fullName>
    </alternativeName>
    <alternativeName>
        <fullName>NKAT2a</fullName>
    </alternativeName>
    <alternativeName>
        <fullName>NKAT2b</fullName>
    </alternativeName>
    <alternativeName>
        <fullName>Natural killer-associated transcript 2</fullName>
        <shortName>NKAT-2</shortName>
    </alternativeName>
    <alternativeName>
        <fullName>p58 natural killer cell receptor clone CL-6</fullName>
        <shortName>p58 NK receptor CL-6</shortName>
    </alternativeName>
    <alternativeName>
        <fullName>p58.2 MHC class-I-specific NK receptor</fullName>
    </alternativeName>
    <cdAntigenName>CD158b2</cdAntigenName>
</protein>
<evidence type="ECO:0000250" key="1"/>
<evidence type="ECO:0000250" key="2">
    <source>
        <dbReference type="UniProtKB" id="P43626"/>
    </source>
</evidence>
<evidence type="ECO:0000255" key="3"/>
<evidence type="ECO:0000256" key="4">
    <source>
        <dbReference type="SAM" id="MobiDB-lite"/>
    </source>
</evidence>
<evidence type="ECO:0000269" key="5">
    <source>
    </source>
</evidence>
<evidence type="ECO:0000269" key="6">
    <source>
    </source>
</evidence>
<evidence type="ECO:0000269" key="7">
    <source>
    </source>
</evidence>
<evidence type="ECO:0000269" key="8">
    <source>
    </source>
</evidence>
<evidence type="ECO:0000269" key="9">
    <source>
    </source>
</evidence>
<evidence type="ECO:0000269" key="10">
    <source>
    </source>
</evidence>
<evidence type="ECO:0000269" key="11">
    <source ref="8"/>
</evidence>
<evidence type="ECO:0000303" key="12">
    <source>
    </source>
</evidence>
<evidence type="ECO:0000305" key="13"/>
<evidence type="ECO:0000312" key="14">
    <source>
        <dbReference type="HGNC" id="HGNC:6331"/>
    </source>
</evidence>
<evidence type="ECO:0007829" key="15">
    <source>
        <dbReference type="PDB" id="1B6U"/>
    </source>
</evidence>
<evidence type="ECO:0007829" key="16">
    <source>
        <dbReference type="PDB" id="6PAG"/>
    </source>
</evidence>
<organism>
    <name type="scientific">Homo sapiens</name>
    <name type="common">Human</name>
    <dbReference type="NCBI Taxonomy" id="9606"/>
    <lineage>
        <taxon>Eukaryota</taxon>
        <taxon>Metazoa</taxon>
        <taxon>Chordata</taxon>
        <taxon>Craniata</taxon>
        <taxon>Vertebrata</taxon>
        <taxon>Euteleostomi</taxon>
        <taxon>Mammalia</taxon>
        <taxon>Eutheria</taxon>
        <taxon>Euarchontoglires</taxon>
        <taxon>Primates</taxon>
        <taxon>Haplorrhini</taxon>
        <taxon>Catarrhini</taxon>
        <taxon>Hominidae</taxon>
        <taxon>Homo</taxon>
    </lineage>
</organism>
<accession>P43628</accession>
<accession>O43472</accession>
<accession>P78402</accession>
<accession>Q14944</accession>
<accession>Q14945</accession>
<accession>Q9UM51</accession>
<accession>Q9UQ70</accession>
<feature type="signal peptide" evidence="1">
    <location>
        <begin position="1"/>
        <end position="21"/>
    </location>
</feature>
<feature type="chain" id="PRO_0000015080" description="Killer cell immunoglobulin-like receptor 2DL3">
    <location>
        <begin position="22"/>
        <end position="341"/>
    </location>
</feature>
<feature type="topological domain" description="Extracellular" evidence="3">
    <location>
        <begin position="22"/>
        <end position="245"/>
    </location>
</feature>
<feature type="transmembrane region" description="Helical" evidence="3">
    <location>
        <begin position="246"/>
        <end position="265"/>
    </location>
</feature>
<feature type="topological domain" description="Cytoplasmic" evidence="3">
    <location>
        <begin position="266"/>
        <end position="341"/>
    </location>
</feature>
<feature type="domain" description="Ig-like C2-type 1">
    <location>
        <begin position="42"/>
        <end position="107"/>
    </location>
</feature>
<feature type="domain" description="Ig-like C2-type 2">
    <location>
        <begin position="142"/>
        <end position="205"/>
    </location>
</feature>
<feature type="region of interest" description="Disordered" evidence="4">
    <location>
        <begin position="220"/>
        <end position="239"/>
    </location>
</feature>
<feature type="compositionally biased region" description="Low complexity" evidence="4">
    <location>
        <begin position="223"/>
        <end position="239"/>
    </location>
</feature>
<feature type="glycosylation site" description="N-linked (GlcNAc...) asparagine" evidence="3">
    <location>
        <position position="84"/>
    </location>
</feature>
<feature type="glycosylation site" description="N-linked (GlcNAc...) asparagine" evidence="3">
    <location>
        <position position="178"/>
    </location>
</feature>
<feature type="glycosylation site" description="N-linked (GlcNAc...) asparagine" evidence="3">
    <location>
        <position position="211"/>
    </location>
</feature>
<feature type="disulfide bond" evidence="2">
    <location>
        <begin position="49"/>
        <end position="100"/>
    </location>
</feature>
<feature type="disulfide bond" evidence="2">
    <location>
        <begin position="149"/>
        <end position="198"/>
    </location>
</feature>
<feature type="splice variant" id="VSP_007814" description="In isoform 2." evidence="12">
    <location>
        <begin position="117"/>
        <end position="214"/>
    </location>
</feature>
<feature type="sequence variant" id="VAR_010313" description="In dbSNP:rs3810343." evidence="8 10">
    <original>V</original>
    <variation>A</variation>
    <location>
        <position position="9"/>
    </location>
</feature>
<feature type="sequence variant" id="VAR_010314" description="In dbSNP:rs202032116." evidence="8 10">
    <original>L</original>
    <variation>R</variation>
    <location>
        <position position="32"/>
    </location>
</feature>
<feature type="sequence variant" id="VAR_015967" description="In dbSNP:rs683003." evidence="11">
    <original>H</original>
    <variation>Q</variation>
    <location>
        <position position="34"/>
    </location>
</feature>
<feature type="sequence variant" id="VAR_049978" description="In dbSNP:rs613240.">
    <original>P</original>
    <variation>R</variation>
    <location>
        <position position="37"/>
    </location>
</feature>
<feature type="sequence variant" id="VAR_010315" description="In dbSNP:rs35719984." evidence="8 10">
    <original>Q</original>
    <variation>E</variation>
    <location>
        <position position="56"/>
    </location>
</feature>
<feature type="sequence variant" id="VAR_049979" description="In dbSNP:rs78713511.">
    <original>F</original>
    <variation>Y</variation>
    <location>
        <position position="66"/>
    </location>
</feature>
<feature type="sequence variant" id="VAR_010316" description="In dbSNP:rs138897134." evidence="8 10">
    <original>H</original>
    <variation>R</variation>
    <location>
        <position position="71"/>
    </location>
</feature>
<feature type="sequence variant" id="VAR_015968" description="In dbSNP:rs35861855." evidence="5 7 9">
    <original>P</original>
    <variation>L</variation>
    <location>
        <position position="229"/>
    </location>
</feature>
<feature type="sequence variant" id="VAR_015969" evidence="8">
    <original>R</original>
    <variation>I</variation>
    <location>
        <position position="242"/>
    </location>
</feature>
<feature type="sequence variant" id="VAR_015970" description="In dbSNP:rs4020187." evidence="7">
    <original>A</original>
    <variation>T</variation>
    <location>
        <position position="304"/>
    </location>
</feature>
<feature type="sequence variant" id="VAR_010317" description="In dbSNP:rs1049267." evidence="5 7 8 10">
    <original>R</original>
    <variation>H</variation>
    <location>
        <position position="318"/>
    </location>
</feature>
<feature type="strand" evidence="16">
    <location>
        <begin position="30"/>
        <end position="35"/>
    </location>
</feature>
<feature type="strand" evidence="16">
    <location>
        <begin position="37"/>
        <end position="40"/>
    </location>
</feature>
<feature type="strand" evidence="16">
    <location>
        <begin position="45"/>
        <end position="53"/>
    </location>
</feature>
<feature type="strand" evidence="16">
    <location>
        <begin position="56"/>
        <end position="66"/>
    </location>
</feature>
<feature type="strand" evidence="16">
    <location>
        <begin position="68"/>
        <end position="73"/>
    </location>
</feature>
<feature type="strand" evidence="16">
    <location>
        <begin position="75"/>
        <end position="77"/>
    </location>
</feature>
<feature type="strand" evidence="16">
    <location>
        <begin position="80"/>
        <end position="87"/>
    </location>
</feature>
<feature type="helix" evidence="16">
    <location>
        <begin position="92"/>
        <end position="94"/>
    </location>
</feature>
<feature type="strand" evidence="16">
    <location>
        <begin position="96"/>
        <end position="101"/>
    </location>
</feature>
<feature type="strand" evidence="16">
    <location>
        <begin position="118"/>
        <end position="123"/>
    </location>
</feature>
<feature type="strand" evidence="16">
    <location>
        <begin position="130"/>
        <end position="135"/>
    </location>
</feature>
<feature type="strand" evidence="16">
    <location>
        <begin position="147"/>
        <end position="153"/>
    </location>
</feature>
<feature type="strand" evidence="16">
    <location>
        <begin position="156"/>
        <end position="160"/>
    </location>
</feature>
<feature type="strand" evidence="15">
    <location>
        <begin position="177"/>
        <end position="179"/>
    </location>
</feature>
<feature type="strand" evidence="16">
    <location>
        <begin position="181"/>
        <end position="183"/>
    </location>
</feature>
<feature type="strand" evidence="16">
    <location>
        <begin position="198"/>
        <end position="202"/>
    </location>
</feature>
<feature type="strand" evidence="16">
    <location>
        <begin position="205"/>
        <end position="209"/>
    </location>
</feature>
<feature type="strand" evidence="15">
    <location>
        <begin position="216"/>
        <end position="218"/>
    </location>
</feature>
<proteinExistence type="evidence at protein level"/>